<feature type="chain" id="PRO_1000007719" description="5'-nucleotidase SurE">
    <location>
        <begin position="1"/>
        <end position="274"/>
    </location>
</feature>
<feature type="binding site" evidence="1">
    <location>
        <position position="12"/>
    </location>
    <ligand>
        <name>a divalent metal cation</name>
        <dbReference type="ChEBI" id="CHEBI:60240"/>
    </ligand>
</feature>
<feature type="binding site" evidence="1">
    <location>
        <position position="13"/>
    </location>
    <ligand>
        <name>a divalent metal cation</name>
        <dbReference type="ChEBI" id="CHEBI:60240"/>
    </ligand>
</feature>
<feature type="binding site" evidence="1">
    <location>
        <position position="45"/>
    </location>
    <ligand>
        <name>a divalent metal cation</name>
        <dbReference type="ChEBI" id="CHEBI:60240"/>
    </ligand>
</feature>
<feature type="binding site" evidence="1">
    <location>
        <position position="103"/>
    </location>
    <ligand>
        <name>a divalent metal cation</name>
        <dbReference type="ChEBI" id="CHEBI:60240"/>
    </ligand>
</feature>
<sequence>MNKKLKVLLTNDDGIFAKGISLLVSNLLKADFADLYIVAPNTEQSGKSMSFSYTEPVSIERVDYHQPVAGAWAVSGSPVDCIKLALGDLFLDSLPDIVLSGINNGSNAGRNIFYSGTAGAAMEAVISGIPAIAFSQEEHISCFQEKKSCELIKMLVLYALSRPFPLLTGFNVNFPACENNEEWQGMKLVATGKEFAYGVPRLLCDDGKRKFYSLNDCQRLMDEDLSEECHSLLTKKITVAPLLVRNSPLGLMSEEEFQQLQQEFEDFIHSEIRS</sequence>
<evidence type="ECO:0000255" key="1">
    <source>
        <dbReference type="HAMAP-Rule" id="MF_00060"/>
    </source>
</evidence>
<keyword id="KW-0963">Cytoplasm</keyword>
<keyword id="KW-0378">Hydrolase</keyword>
<keyword id="KW-0479">Metal-binding</keyword>
<keyword id="KW-0547">Nucleotide-binding</keyword>
<accession>Q254M8</accession>
<name>SURE_CHLFF</name>
<gene>
    <name evidence="1" type="primary">surE</name>
    <name type="ordered locus">CF0488</name>
</gene>
<protein>
    <recommendedName>
        <fullName evidence="1">5'-nucleotidase SurE</fullName>
        <ecNumber evidence="1">3.1.3.5</ecNumber>
    </recommendedName>
    <alternativeName>
        <fullName evidence="1">Nucleoside 5'-monophosphate phosphohydrolase</fullName>
    </alternativeName>
</protein>
<comment type="function">
    <text evidence="1">Nucleotidase that shows phosphatase activity on nucleoside 5'-monophosphates.</text>
</comment>
<comment type="catalytic activity">
    <reaction evidence="1">
        <text>a ribonucleoside 5'-phosphate + H2O = a ribonucleoside + phosphate</text>
        <dbReference type="Rhea" id="RHEA:12484"/>
        <dbReference type="ChEBI" id="CHEBI:15377"/>
        <dbReference type="ChEBI" id="CHEBI:18254"/>
        <dbReference type="ChEBI" id="CHEBI:43474"/>
        <dbReference type="ChEBI" id="CHEBI:58043"/>
        <dbReference type="EC" id="3.1.3.5"/>
    </reaction>
</comment>
<comment type="cofactor">
    <cofactor evidence="1">
        <name>a divalent metal cation</name>
        <dbReference type="ChEBI" id="CHEBI:60240"/>
    </cofactor>
    <text evidence="1">Binds 1 divalent metal cation per subunit.</text>
</comment>
<comment type="subcellular location">
    <subcellularLocation>
        <location evidence="1">Cytoplasm</location>
    </subcellularLocation>
</comment>
<comment type="similarity">
    <text evidence="1">Belongs to the SurE nucleotidase family.</text>
</comment>
<reference key="1">
    <citation type="journal article" date="2006" name="DNA Res.">
        <title>Genome sequence of the cat pathogen, Chlamydophila felis.</title>
        <authorList>
            <person name="Azuma Y."/>
            <person name="Hirakawa H."/>
            <person name="Yamashita A."/>
            <person name="Cai Y."/>
            <person name="Rahman M.A."/>
            <person name="Suzuki H."/>
            <person name="Mitaku S."/>
            <person name="Toh H."/>
            <person name="Goto S."/>
            <person name="Murakami T."/>
            <person name="Sugi K."/>
            <person name="Hayashi H."/>
            <person name="Fukushi H."/>
            <person name="Hattori M."/>
            <person name="Kuhara S."/>
            <person name="Shirai M."/>
        </authorList>
    </citation>
    <scope>NUCLEOTIDE SEQUENCE [LARGE SCALE GENOMIC DNA]</scope>
    <source>
        <strain>Fe/C-56</strain>
    </source>
</reference>
<proteinExistence type="inferred from homology"/>
<dbReference type="EC" id="3.1.3.5" evidence="1"/>
<dbReference type="EMBL" id="AP006861">
    <property type="protein sequence ID" value="BAE81260.1"/>
    <property type="molecule type" value="Genomic_DNA"/>
</dbReference>
<dbReference type="RefSeq" id="WP_011458040.1">
    <property type="nucleotide sequence ID" value="NC_007899.1"/>
</dbReference>
<dbReference type="SMR" id="Q254M8"/>
<dbReference type="STRING" id="264202.CF0488"/>
<dbReference type="KEGG" id="cfe:CF0488"/>
<dbReference type="eggNOG" id="COG0496">
    <property type="taxonomic scope" value="Bacteria"/>
</dbReference>
<dbReference type="HOGENOM" id="CLU_045192_1_0_0"/>
<dbReference type="OrthoDB" id="9780815at2"/>
<dbReference type="Proteomes" id="UP000001260">
    <property type="component" value="Chromosome"/>
</dbReference>
<dbReference type="GO" id="GO:0005737">
    <property type="term" value="C:cytoplasm"/>
    <property type="evidence" value="ECO:0007669"/>
    <property type="project" value="UniProtKB-SubCell"/>
</dbReference>
<dbReference type="GO" id="GO:0008254">
    <property type="term" value="F:3'-nucleotidase activity"/>
    <property type="evidence" value="ECO:0007669"/>
    <property type="project" value="TreeGrafter"/>
</dbReference>
<dbReference type="GO" id="GO:0008253">
    <property type="term" value="F:5'-nucleotidase activity"/>
    <property type="evidence" value="ECO:0007669"/>
    <property type="project" value="UniProtKB-UniRule"/>
</dbReference>
<dbReference type="GO" id="GO:0004309">
    <property type="term" value="F:exopolyphosphatase activity"/>
    <property type="evidence" value="ECO:0007669"/>
    <property type="project" value="TreeGrafter"/>
</dbReference>
<dbReference type="GO" id="GO:0046872">
    <property type="term" value="F:metal ion binding"/>
    <property type="evidence" value="ECO:0007669"/>
    <property type="project" value="UniProtKB-UniRule"/>
</dbReference>
<dbReference type="GO" id="GO:0000166">
    <property type="term" value="F:nucleotide binding"/>
    <property type="evidence" value="ECO:0007669"/>
    <property type="project" value="UniProtKB-KW"/>
</dbReference>
<dbReference type="Gene3D" id="3.40.1210.10">
    <property type="entry name" value="Survival protein SurE-like phosphatase/nucleotidase"/>
    <property type="match status" value="1"/>
</dbReference>
<dbReference type="HAMAP" id="MF_00060">
    <property type="entry name" value="SurE"/>
    <property type="match status" value="1"/>
</dbReference>
<dbReference type="InterPro" id="IPR030048">
    <property type="entry name" value="SurE"/>
</dbReference>
<dbReference type="InterPro" id="IPR002828">
    <property type="entry name" value="SurE-like_Pase/nucleotidase"/>
</dbReference>
<dbReference type="InterPro" id="IPR036523">
    <property type="entry name" value="SurE-like_sf"/>
</dbReference>
<dbReference type="NCBIfam" id="NF001493">
    <property type="entry name" value="PRK00346.2-3"/>
    <property type="match status" value="1"/>
</dbReference>
<dbReference type="NCBIfam" id="TIGR00087">
    <property type="entry name" value="surE"/>
    <property type="match status" value="1"/>
</dbReference>
<dbReference type="PANTHER" id="PTHR30457">
    <property type="entry name" value="5'-NUCLEOTIDASE SURE"/>
    <property type="match status" value="1"/>
</dbReference>
<dbReference type="PANTHER" id="PTHR30457:SF12">
    <property type="entry name" value="5'_3'-NUCLEOTIDASE SURE"/>
    <property type="match status" value="1"/>
</dbReference>
<dbReference type="Pfam" id="PF01975">
    <property type="entry name" value="SurE"/>
    <property type="match status" value="1"/>
</dbReference>
<dbReference type="SUPFAM" id="SSF64167">
    <property type="entry name" value="SurE-like"/>
    <property type="match status" value="1"/>
</dbReference>
<organism>
    <name type="scientific">Chlamydia felis (strain Fe/C-56)</name>
    <name type="common">Chlamydophila felis</name>
    <dbReference type="NCBI Taxonomy" id="264202"/>
    <lineage>
        <taxon>Bacteria</taxon>
        <taxon>Pseudomonadati</taxon>
        <taxon>Chlamydiota</taxon>
        <taxon>Chlamydiia</taxon>
        <taxon>Chlamydiales</taxon>
        <taxon>Chlamydiaceae</taxon>
        <taxon>Chlamydia/Chlamydophila group</taxon>
        <taxon>Chlamydia</taxon>
    </lineage>
</organism>